<organism>
    <name type="scientific">Oceanobacillus iheyensis (strain DSM 14371 / CIP 107618 / JCM 11309 / KCTC 3954 / HTE831)</name>
    <dbReference type="NCBI Taxonomy" id="221109"/>
    <lineage>
        <taxon>Bacteria</taxon>
        <taxon>Bacillati</taxon>
        <taxon>Bacillota</taxon>
        <taxon>Bacilli</taxon>
        <taxon>Bacillales</taxon>
        <taxon>Bacillaceae</taxon>
        <taxon>Oceanobacillus</taxon>
    </lineage>
</organism>
<proteinExistence type="inferred from homology"/>
<accession>Q8ER05</accession>
<gene>
    <name evidence="1" type="primary">rnc</name>
    <name type="ordered locus">OB1526</name>
</gene>
<dbReference type="EC" id="3.1.26.3" evidence="1"/>
<dbReference type="EMBL" id="BA000028">
    <property type="protein sequence ID" value="BAC13482.1"/>
    <property type="molecule type" value="Genomic_DNA"/>
</dbReference>
<dbReference type="RefSeq" id="WP_011065926.1">
    <property type="nucleotide sequence ID" value="NC_004193.1"/>
</dbReference>
<dbReference type="SMR" id="Q8ER05"/>
<dbReference type="STRING" id="221109.gene:10733766"/>
<dbReference type="KEGG" id="oih:OB1526"/>
<dbReference type="eggNOG" id="COG0571">
    <property type="taxonomic scope" value="Bacteria"/>
</dbReference>
<dbReference type="HOGENOM" id="CLU_000907_1_3_9"/>
<dbReference type="OrthoDB" id="9805026at2"/>
<dbReference type="PhylomeDB" id="Q8ER05"/>
<dbReference type="Proteomes" id="UP000000822">
    <property type="component" value="Chromosome"/>
</dbReference>
<dbReference type="GO" id="GO:0005737">
    <property type="term" value="C:cytoplasm"/>
    <property type="evidence" value="ECO:0007669"/>
    <property type="project" value="UniProtKB-SubCell"/>
</dbReference>
<dbReference type="GO" id="GO:0003725">
    <property type="term" value="F:double-stranded RNA binding"/>
    <property type="evidence" value="ECO:0007669"/>
    <property type="project" value="TreeGrafter"/>
</dbReference>
<dbReference type="GO" id="GO:0046872">
    <property type="term" value="F:metal ion binding"/>
    <property type="evidence" value="ECO:0007669"/>
    <property type="project" value="UniProtKB-KW"/>
</dbReference>
<dbReference type="GO" id="GO:0004525">
    <property type="term" value="F:ribonuclease III activity"/>
    <property type="evidence" value="ECO:0007669"/>
    <property type="project" value="UniProtKB-UniRule"/>
</dbReference>
<dbReference type="GO" id="GO:0019843">
    <property type="term" value="F:rRNA binding"/>
    <property type="evidence" value="ECO:0007669"/>
    <property type="project" value="UniProtKB-KW"/>
</dbReference>
<dbReference type="GO" id="GO:0006397">
    <property type="term" value="P:mRNA processing"/>
    <property type="evidence" value="ECO:0007669"/>
    <property type="project" value="UniProtKB-UniRule"/>
</dbReference>
<dbReference type="GO" id="GO:0010468">
    <property type="term" value="P:regulation of gene expression"/>
    <property type="evidence" value="ECO:0007669"/>
    <property type="project" value="TreeGrafter"/>
</dbReference>
<dbReference type="GO" id="GO:0006364">
    <property type="term" value="P:rRNA processing"/>
    <property type="evidence" value="ECO:0007669"/>
    <property type="project" value="UniProtKB-UniRule"/>
</dbReference>
<dbReference type="GO" id="GO:0008033">
    <property type="term" value="P:tRNA processing"/>
    <property type="evidence" value="ECO:0007669"/>
    <property type="project" value="UniProtKB-KW"/>
</dbReference>
<dbReference type="CDD" id="cd10845">
    <property type="entry name" value="DSRM_RNAse_III_family"/>
    <property type="match status" value="1"/>
</dbReference>
<dbReference type="CDD" id="cd00593">
    <property type="entry name" value="RIBOc"/>
    <property type="match status" value="1"/>
</dbReference>
<dbReference type="FunFam" id="1.10.1520.10:FF:000001">
    <property type="entry name" value="Ribonuclease 3"/>
    <property type="match status" value="1"/>
</dbReference>
<dbReference type="FunFam" id="3.30.160.20:FF:000003">
    <property type="entry name" value="Ribonuclease 3"/>
    <property type="match status" value="1"/>
</dbReference>
<dbReference type="Gene3D" id="3.30.160.20">
    <property type="match status" value="1"/>
</dbReference>
<dbReference type="Gene3D" id="1.10.1520.10">
    <property type="entry name" value="Ribonuclease III domain"/>
    <property type="match status" value="1"/>
</dbReference>
<dbReference type="HAMAP" id="MF_00104">
    <property type="entry name" value="RNase_III"/>
    <property type="match status" value="1"/>
</dbReference>
<dbReference type="InterPro" id="IPR014720">
    <property type="entry name" value="dsRBD_dom"/>
</dbReference>
<dbReference type="InterPro" id="IPR011907">
    <property type="entry name" value="RNase_III"/>
</dbReference>
<dbReference type="InterPro" id="IPR000999">
    <property type="entry name" value="RNase_III_dom"/>
</dbReference>
<dbReference type="InterPro" id="IPR036389">
    <property type="entry name" value="RNase_III_sf"/>
</dbReference>
<dbReference type="NCBIfam" id="TIGR02191">
    <property type="entry name" value="RNaseIII"/>
    <property type="match status" value="1"/>
</dbReference>
<dbReference type="PANTHER" id="PTHR11207:SF0">
    <property type="entry name" value="RIBONUCLEASE 3"/>
    <property type="match status" value="1"/>
</dbReference>
<dbReference type="PANTHER" id="PTHR11207">
    <property type="entry name" value="RIBONUCLEASE III"/>
    <property type="match status" value="1"/>
</dbReference>
<dbReference type="Pfam" id="PF00035">
    <property type="entry name" value="dsrm"/>
    <property type="match status" value="1"/>
</dbReference>
<dbReference type="Pfam" id="PF14622">
    <property type="entry name" value="Ribonucleas_3_3"/>
    <property type="match status" value="1"/>
</dbReference>
<dbReference type="SMART" id="SM00358">
    <property type="entry name" value="DSRM"/>
    <property type="match status" value="1"/>
</dbReference>
<dbReference type="SMART" id="SM00535">
    <property type="entry name" value="RIBOc"/>
    <property type="match status" value="1"/>
</dbReference>
<dbReference type="SUPFAM" id="SSF54768">
    <property type="entry name" value="dsRNA-binding domain-like"/>
    <property type="match status" value="1"/>
</dbReference>
<dbReference type="SUPFAM" id="SSF69065">
    <property type="entry name" value="RNase III domain-like"/>
    <property type="match status" value="1"/>
</dbReference>
<dbReference type="PROSITE" id="PS50137">
    <property type="entry name" value="DS_RBD"/>
    <property type="match status" value="1"/>
</dbReference>
<dbReference type="PROSITE" id="PS00517">
    <property type="entry name" value="RNASE_3_1"/>
    <property type="match status" value="1"/>
</dbReference>
<dbReference type="PROSITE" id="PS50142">
    <property type="entry name" value="RNASE_3_2"/>
    <property type="match status" value="1"/>
</dbReference>
<protein>
    <recommendedName>
        <fullName evidence="1">Ribonuclease 3</fullName>
        <ecNumber evidence="1">3.1.26.3</ecNumber>
    </recommendedName>
    <alternativeName>
        <fullName evidence="1">Ribonuclease III</fullName>
        <shortName evidence="1">RNase III</shortName>
    </alternativeName>
</protein>
<reference key="1">
    <citation type="journal article" date="2002" name="Nucleic Acids Res.">
        <title>Genome sequence of Oceanobacillus iheyensis isolated from the Iheya Ridge and its unexpected adaptive capabilities to extreme environments.</title>
        <authorList>
            <person name="Takami H."/>
            <person name="Takaki Y."/>
            <person name="Uchiyama I."/>
        </authorList>
    </citation>
    <scope>NUCLEOTIDE SEQUENCE [LARGE SCALE GENOMIC DNA]</scope>
    <source>
        <strain>DSM 14371 / CIP 107618 / JCM 11309 / KCTC 3954 / HTE831</strain>
    </source>
</reference>
<comment type="function">
    <text evidence="1">Digests double-stranded RNA. Involved in the processing of primary rRNA transcript to yield the immediate precursors to the large and small rRNAs (23S and 16S). Processes some mRNAs, and tRNAs when they are encoded in the rRNA operon. Processes pre-crRNA and tracrRNA of type II CRISPR loci if present in the organism.</text>
</comment>
<comment type="catalytic activity">
    <reaction evidence="1">
        <text>Endonucleolytic cleavage to 5'-phosphomonoester.</text>
        <dbReference type="EC" id="3.1.26.3"/>
    </reaction>
</comment>
<comment type="cofactor">
    <cofactor evidence="1">
        <name>Mg(2+)</name>
        <dbReference type="ChEBI" id="CHEBI:18420"/>
    </cofactor>
</comment>
<comment type="subunit">
    <text evidence="1">Homodimer.</text>
</comment>
<comment type="subcellular location">
    <subcellularLocation>
        <location evidence="1">Cytoplasm</location>
    </subcellularLocation>
</comment>
<comment type="similarity">
    <text evidence="1">Belongs to the ribonuclease III family.</text>
</comment>
<name>RNC_OCEIH</name>
<keyword id="KW-0963">Cytoplasm</keyword>
<keyword id="KW-0255">Endonuclease</keyword>
<keyword id="KW-0378">Hydrolase</keyword>
<keyword id="KW-0460">Magnesium</keyword>
<keyword id="KW-0479">Metal-binding</keyword>
<keyword id="KW-0507">mRNA processing</keyword>
<keyword id="KW-0540">Nuclease</keyword>
<keyword id="KW-1185">Reference proteome</keyword>
<keyword id="KW-0694">RNA-binding</keyword>
<keyword id="KW-0698">rRNA processing</keyword>
<keyword id="KW-0699">rRNA-binding</keyword>
<keyword id="KW-0819">tRNA processing</keyword>
<evidence type="ECO:0000255" key="1">
    <source>
        <dbReference type="HAMAP-Rule" id="MF_00104"/>
    </source>
</evidence>
<evidence type="ECO:0000256" key="2">
    <source>
        <dbReference type="SAM" id="MobiDB-lite"/>
    </source>
</evidence>
<feature type="chain" id="PRO_0000180417" description="Ribonuclease 3">
    <location>
        <begin position="1"/>
        <end position="228"/>
    </location>
</feature>
<feature type="domain" description="RNase III" evidence="1">
    <location>
        <begin position="3"/>
        <end position="132"/>
    </location>
</feature>
<feature type="domain" description="DRBM" evidence="1">
    <location>
        <begin position="158"/>
        <end position="227"/>
    </location>
</feature>
<feature type="region of interest" description="Disordered" evidence="2">
    <location>
        <begin position="205"/>
        <end position="228"/>
    </location>
</feature>
<feature type="active site" evidence="1">
    <location>
        <position position="49"/>
    </location>
</feature>
<feature type="active site" evidence="1">
    <location>
        <position position="121"/>
    </location>
</feature>
<feature type="binding site" evidence="1">
    <location>
        <position position="45"/>
    </location>
    <ligand>
        <name>Mg(2+)</name>
        <dbReference type="ChEBI" id="CHEBI:18420"/>
    </ligand>
</feature>
<feature type="binding site" evidence="1">
    <location>
        <position position="118"/>
    </location>
    <ligand>
        <name>Mg(2+)</name>
        <dbReference type="ChEBI" id="CHEBI:18420"/>
    </ligand>
</feature>
<feature type="binding site" evidence="1">
    <location>
        <position position="121"/>
    </location>
    <ligand>
        <name>Mg(2+)</name>
        <dbReference type="ChEBI" id="CHEBI:18420"/>
    </ligand>
</feature>
<sequence length="228" mass="25918">MDIRPLEEHLGISFQQKALLKEAFTHSSYVNEHRKQRLSDNERLEFLGDAVLELAVSQYLYRNNKDMPEGEMTKLRAAIVCEPSLKNFAEELEFGKFLRLGKGEQQTGGRERPAILADAFEAFLGALYLDQGFDNVLDFLNIHVFPKLTTGAFSHAMDYKSQLQEFVQQHKDQKIEYRIIEEKGPSHNKEFVAEVVIQEKAAGIGTGRTKKEAEQRAAKNALDSINNS</sequence>